<keyword id="KW-0002">3D-structure</keyword>
<keyword id="KW-0131">Cell cycle</keyword>
<keyword id="KW-0132">Cell division</keyword>
<keyword id="KW-0344">Guanine-nucleotide releasing factor</keyword>
<keyword id="KW-0498">Mitosis</keyword>
<keyword id="KW-0539">Nucleus</keyword>
<keyword id="KW-0589">Pheromone response</keyword>
<keyword id="KW-0597">Phosphoprotein</keyword>
<keyword id="KW-1185">Reference proteome</keyword>
<keyword id="KW-0677">Repeat</keyword>
<keyword id="KW-0813">Transport</keyword>
<dbReference type="EMBL" id="M27013">
    <property type="protein sequence ID" value="AAA62268.1"/>
    <property type="molecule type" value="Genomic_DNA"/>
</dbReference>
<dbReference type="EMBL" id="Z72619">
    <property type="protein sequence ID" value="CAA96803.1"/>
    <property type="molecule type" value="Genomic_DNA"/>
</dbReference>
<dbReference type="EMBL" id="BK006941">
    <property type="protein sequence ID" value="DAA08009.1"/>
    <property type="molecule type" value="Genomic_DNA"/>
</dbReference>
<dbReference type="PIR" id="A32320">
    <property type="entry name" value="RGBYM1"/>
</dbReference>
<dbReference type="RefSeq" id="NP_011418.1">
    <property type="nucleotide sequence ID" value="NM_001180962.1"/>
</dbReference>
<dbReference type="PDB" id="3OF7">
    <property type="method" value="X-ray"/>
    <property type="resolution" value="1.90 A"/>
    <property type="chains" value="A=27-482"/>
</dbReference>
<dbReference type="PDB" id="4OIH">
    <property type="method" value="X-ray"/>
    <property type="resolution" value="2.10 A"/>
    <property type="chains" value="B=1-25"/>
</dbReference>
<dbReference type="PDB" id="5HQ2">
    <property type="method" value="X-ray"/>
    <property type="resolution" value="4.50 A"/>
    <property type="chains" value="K=2-482"/>
</dbReference>
<dbReference type="PDB" id="5T94">
    <property type="method" value="X-ray"/>
    <property type="resolution" value="2.63 A"/>
    <property type="chains" value="A=1-482"/>
</dbReference>
<dbReference type="PDBsum" id="3OF7"/>
<dbReference type="PDBsum" id="4OIH"/>
<dbReference type="PDBsum" id="5HQ2"/>
<dbReference type="PDBsum" id="5T94"/>
<dbReference type="SMR" id="P21827"/>
<dbReference type="BioGRID" id="33153">
    <property type="interactions" value="367"/>
</dbReference>
<dbReference type="DIP" id="DIP-2315N"/>
<dbReference type="FunCoup" id="P21827">
    <property type="interactions" value="1167"/>
</dbReference>
<dbReference type="IntAct" id="P21827">
    <property type="interactions" value="7"/>
</dbReference>
<dbReference type="MINT" id="P21827"/>
<dbReference type="STRING" id="4932.YGL097W"/>
<dbReference type="iPTMnet" id="P21827"/>
<dbReference type="PaxDb" id="4932-YGL097W"/>
<dbReference type="PeptideAtlas" id="P21827"/>
<dbReference type="DNASU" id="852782"/>
<dbReference type="EnsemblFungi" id="YGL097W_mRNA">
    <property type="protein sequence ID" value="YGL097W"/>
    <property type="gene ID" value="YGL097W"/>
</dbReference>
<dbReference type="GeneID" id="852782"/>
<dbReference type="KEGG" id="sce:YGL097W"/>
<dbReference type="AGR" id="SGD:S000003065"/>
<dbReference type="SGD" id="S000003065">
    <property type="gene designation" value="SRM1"/>
</dbReference>
<dbReference type="VEuPathDB" id="FungiDB:YGL097W"/>
<dbReference type="eggNOG" id="KOG1426">
    <property type="taxonomic scope" value="Eukaryota"/>
</dbReference>
<dbReference type="GeneTree" id="ENSGT00940000174254"/>
<dbReference type="HOGENOM" id="CLU_005210_4_0_1"/>
<dbReference type="InParanoid" id="P21827"/>
<dbReference type="OMA" id="IFVWGTG"/>
<dbReference type="OrthoDB" id="61110at2759"/>
<dbReference type="BioCyc" id="YEAST:G3O-30597-MONOMER"/>
<dbReference type="Reactome" id="R-SCE-9615933">
    <property type="pathway name" value="Postmitotic nuclear pore complex (NPC) reformation"/>
</dbReference>
<dbReference type="BioGRID-ORCS" id="852782">
    <property type="hits" value="4 hits in 10 CRISPR screens"/>
</dbReference>
<dbReference type="EvolutionaryTrace" id="P21827"/>
<dbReference type="PRO" id="PR:P21827"/>
<dbReference type="Proteomes" id="UP000002311">
    <property type="component" value="Chromosome VII"/>
</dbReference>
<dbReference type="RNAct" id="P21827">
    <property type="molecule type" value="protein"/>
</dbReference>
<dbReference type="GO" id="GO:0000785">
    <property type="term" value="C:chromatin"/>
    <property type="evidence" value="ECO:0000314"/>
    <property type="project" value="SGD"/>
</dbReference>
<dbReference type="GO" id="GO:0005737">
    <property type="term" value="C:cytoplasm"/>
    <property type="evidence" value="ECO:0000314"/>
    <property type="project" value="SGD"/>
</dbReference>
<dbReference type="GO" id="GO:0005634">
    <property type="term" value="C:nucleus"/>
    <property type="evidence" value="ECO:0000314"/>
    <property type="project" value="SGD"/>
</dbReference>
<dbReference type="GO" id="GO:0005085">
    <property type="term" value="F:guanyl-nucleotide exchange factor activity"/>
    <property type="evidence" value="ECO:0000316"/>
    <property type="project" value="SGD"/>
</dbReference>
<dbReference type="GO" id="GO:0051301">
    <property type="term" value="P:cell division"/>
    <property type="evidence" value="ECO:0007669"/>
    <property type="project" value="UniProtKB-KW"/>
</dbReference>
<dbReference type="GO" id="GO:0006997">
    <property type="term" value="P:nucleus organization"/>
    <property type="evidence" value="ECO:0000315"/>
    <property type="project" value="SGD"/>
</dbReference>
<dbReference type="GO" id="GO:0016973">
    <property type="term" value="P:poly(A)+ mRNA export from nucleus"/>
    <property type="evidence" value="ECO:0000315"/>
    <property type="project" value="SGD"/>
</dbReference>
<dbReference type="GO" id="GO:0006606">
    <property type="term" value="P:protein import into nucleus"/>
    <property type="evidence" value="ECO:0000315"/>
    <property type="project" value="SGD"/>
</dbReference>
<dbReference type="GO" id="GO:0007346">
    <property type="term" value="P:regulation of mitotic cell cycle"/>
    <property type="evidence" value="ECO:0000318"/>
    <property type="project" value="GO_Central"/>
</dbReference>
<dbReference type="GO" id="GO:1901673">
    <property type="term" value="P:regulation of mitotic spindle assembly"/>
    <property type="evidence" value="ECO:0000318"/>
    <property type="project" value="GO_Central"/>
</dbReference>
<dbReference type="GO" id="GO:0019236">
    <property type="term" value="P:response to pheromone"/>
    <property type="evidence" value="ECO:0007669"/>
    <property type="project" value="UniProtKB-KW"/>
</dbReference>
<dbReference type="GO" id="GO:0000054">
    <property type="term" value="P:ribosomal subunit export from nucleus"/>
    <property type="evidence" value="ECO:0000315"/>
    <property type="project" value="SGD"/>
</dbReference>
<dbReference type="FunFam" id="2.130.10.30:FF:000041">
    <property type="entry name" value="Guanine nucleotide exchange factor SRM1"/>
    <property type="match status" value="1"/>
</dbReference>
<dbReference type="Gene3D" id="2.130.10.30">
    <property type="entry name" value="Regulator of chromosome condensation 1/beta-lactamase-inhibitor protein II"/>
    <property type="match status" value="1"/>
</dbReference>
<dbReference type="InterPro" id="IPR051553">
    <property type="entry name" value="Ran_GTPase-activating"/>
</dbReference>
<dbReference type="InterPro" id="IPR009091">
    <property type="entry name" value="RCC1/BLIP-II"/>
</dbReference>
<dbReference type="InterPro" id="IPR000408">
    <property type="entry name" value="Reg_chr_condens"/>
</dbReference>
<dbReference type="PANTHER" id="PTHR45982">
    <property type="entry name" value="REGULATOR OF CHROMOSOME CONDENSATION"/>
    <property type="match status" value="1"/>
</dbReference>
<dbReference type="PANTHER" id="PTHR45982:SF1">
    <property type="entry name" value="REGULATOR OF CHROMOSOME CONDENSATION"/>
    <property type="match status" value="1"/>
</dbReference>
<dbReference type="Pfam" id="PF25390">
    <property type="entry name" value="WD40_RLD"/>
    <property type="match status" value="1"/>
</dbReference>
<dbReference type="PRINTS" id="PR00633">
    <property type="entry name" value="RCCNDNSATION"/>
</dbReference>
<dbReference type="SUPFAM" id="SSF50985">
    <property type="entry name" value="RCC1/BLIP-II"/>
    <property type="match status" value="1"/>
</dbReference>
<dbReference type="PROSITE" id="PS00625">
    <property type="entry name" value="RCC1_1"/>
    <property type="match status" value="1"/>
</dbReference>
<dbReference type="PROSITE" id="PS00626">
    <property type="entry name" value="RCC1_2"/>
    <property type="match status" value="1"/>
</dbReference>
<dbReference type="PROSITE" id="PS50012">
    <property type="entry name" value="RCC1_3"/>
    <property type="match status" value="7"/>
</dbReference>
<proteinExistence type="evidence at protein level"/>
<name>RCC1_YEAST</name>
<protein>
    <recommendedName>
        <fullName>Guanine nucleotide exchange factor SRM1</fullName>
    </recommendedName>
    <alternativeName>
        <fullName>Pheromone response pathway component SRM1</fullName>
    </alternativeName>
    <alternativeName>
        <fullName>Pre-mRNA-processing protein 20</fullName>
    </alternativeName>
    <alternativeName>
        <fullName>Regulator of chromosome condensation</fullName>
    </alternativeName>
    <alternativeName>
        <fullName>Suppressor of receptor mutations 1</fullName>
    </alternativeName>
    <alternativeName>
        <fullName>mRNA transport protein 1</fullName>
    </alternativeName>
</protein>
<reference key="1">
    <citation type="journal article" date="1989" name="Mol. Cell. Biol.">
        <title>Yeast pheromone response pathway: characterization of a suppressor that restores mating to receptorless mutants.</title>
        <authorList>
            <person name="Clark K.L."/>
            <person name="Sprague G.F. Jr."/>
        </authorList>
    </citation>
    <scope>NUCLEOTIDE SEQUENCE [GENOMIC DNA]</scope>
    <scope>FUNCTION</scope>
</reference>
<reference key="2">
    <citation type="journal article" date="1990" name="Mol. Gen. Genet.">
        <title>A yeast mutant, PRP20, altered in mRNA metabolism and maintenance of the nuclear structure, is defective in a gene homologous to the human gene RCC1 which is involved in the control of chromosome condensation.</title>
        <authorList>
            <person name="Aebi M."/>
            <person name="Clark M.W."/>
            <person name="Vijayraghavan U."/>
            <person name="Abelson J."/>
        </authorList>
    </citation>
    <scope>NUCLEOTIDE SEQUENCE [GENOMIC DNA]</scope>
    <scope>FUNCTION</scope>
</reference>
<reference key="3">
    <citation type="journal article" date="1997" name="Yeast">
        <title>Sequence analysis of 203 kilobases from Saccharomyces cerevisiae chromosome VII.</title>
        <authorList>
            <person name="Rieger M."/>
            <person name="Brueckner M."/>
            <person name="Schaefer M."/>
            <person name="Mueller-Auer S."/>
        </authorList>
    </citation>
    <scope>NUCLEOTIDE SEQUENCE [GENOMIC DNA]</scope>
    <source>
        <strain>ATCC 204508 / S288c</strain>
    </source>
</reference>
<reference key="4">
    <citation type="journal article" date="1997" name="Nature">
        <title>The nucleotide sequence of Saccharomyces cerevisiae chromosome VII.</title>
        <authorList>
            <person name="Tettelin H."/>
            <person name="Agostoni-Carbone M.L."/>
            <person name="Albermann K."/>
            <person name="Albers M."/>
            <person name="Arroyo J."/>
            <person name="Backes U."/>
            <person name="Barreiros T."/>
            <person name="Bertani I."/>
            <person name="Bjourson A.J."/>
            <person name="Brueckner M."/>
            <person name="Bruschi C.V."/>
            <person name="Carignani G."/>
            <person name="Castagnoli L."/>
            <person name="Cerdan E."/>
            <person name="Clemente M.L."/>
            <person name="Coblenz A."/>
            <person name="Coglievina M."/>
            <person name="Coissac E."/>
            <person name="Defoor E."/>
            <person name="Del Bino S."/>
            <person name="Delius H."/>
            <person name="Delneri D."/>
            <person name="de Wergifosse P."/>
            <person name="Dujon B."/>
            <person name="Durand P."/>
            <person name="Entian K.-D."/>
            <person name="Eraso P."/>
            <person name="Escribano V."/>
            <person name="Fabiani L."/>
            <person name="Fartmann B."/>
            <person name="Feroli F."/>
            <person name="Feuermann M."/>
            <person name="Frontali L."/>
            <person name="Garcia-Gonzalez M."/>
            <person name="Garcia-Saez M.I."/>
            <person name="Goffeau A."/>
            <person name="Guerreiro P."/>
            <person name="Hani J."/>
            <person name="Hansen M."/>
            <person name="Hebling U."/>
            <person name="Hernandez K."/>
            <person name="Heumann K."/>
            <person name="Hilger F."/>
            <person name="Hofmann B."/>
            <person name="Indge K.J."/>
            <person name="James C.M."/>
            <person name="Klima R."/>
            <person name="Koetter P."/>
            <person name="Kramer B."/>
            <person name="Kramer W."/>
            <person name="Lauquin G."/>
            <person name="Leuther H."/>
            <person name="Louis E.J."/>
            <person name="Maillier E."/>
            <person name="Marconi A."/>
            <person name="Martegani E."/>
            <person name="Mazon M.J."/>
            <person name="Mazzoni C."/>
            <person name="McReynolds A.D.K."/>
            <person name="Melchioretto P."/>
            <person name="Mewes H.-W."/>
            <person name="Minenkova O."/>
            <person name="Mueller-Auer S."/>
            <person name="Nawrocki A."/>
            <person name="Netter P."/>
            <person name="Neu R."/>
            <person name="Nombela C."/>
            <person name="Oliver S.G."/>
            <person name="Panzeri L."/>
            <person name="Paoluzi S."/>
            <person name="Plevani P."/>
            <person name="Portetelle D."/>
            <person name="Portillo F."/>
            <person name="Potier S."/>
            <person name="Purnelle B."/>
            <person name="Rieger M."/>
            <person name="Riles L."/>
            <person name="Rinaldi T."/>
            <person name="Robben J."/>
            <person name="Rodrigues-Pousada C."/>
            <person name="Rodriguez-Belmonte E."/>
            <person name="Rodriguez-Torres A.M."/>
            <person name="Rose M."/>
            <person name="Ruzzi M."/>
            <person name="Saliola M."/>
            <person name="Sanchez-Perez M."/>
            <person name="Schaefer B."/>
            <person name="Schaefer M."/>
            <person name="Scharfe M."/>
            <person name="Schmidheini T."/>
            <person name="Schreer A."/>
            <person name="Skala J."/>
            <person name="Souciet J.-L."/>
            <person name="Steensma H.Y."/>
            <person name="Talla E."/>
            <person name="Thierry A."/>
            <person name="Vandenbol M."/>
            <person name="van der Aart Q.J.M."/>
            <person name="Van Dyck L."/>
            <person name="Vanoni M."/>
            <person name="Verhasselt P."/>
            <person name="Voet M."/>
            <person name="Volckaert G."/>
            <person name="Wambutt R."/>
            <person name="Watson M.D."/>
            <person name="Weber N."/>
            <person name="Wedler E."/>
            <person name="Wedler H."/>
            <person name="Wipfli P."/>
            <person name="Wolf K."/>
            <person name="Wright L.F."/>
            <person name="Zaccaria P."/>
            <person name="Zimmermann M."/>
            <person name="Zollner A."/>
            <person name="Kleine K."/>
        </authorList>
    </citation>
    <scope>NUCLEOTIDE SEQUENCE [LARGE SCALE GENOMIC DNA]</scope>
    <source>
        <strain>ATCC 204508 / S288c</strain>
    </source>
</reference>
<reference key="5">
    <citation type="journal article" date="2014" name="G3 (Bethesda)">
        <title>The reference genome sequence of Saccharomyces cerevisiae: Then and now.</title>
        <authorList>
            <person name="Engel S.R."/>
            <person name="Dietrich F.S."/>
            <person name="Fisk D.G."/>
            <person name="Binkley G."/>
            <person name="Balakrishnan R."/>
            <person name="Costanzo M.C."/>
            <person name="Dwight S.S."/>
            <person name="Hitz B.C."/>
            <person name="Karra K."/>
            <person name="Nash R.S."/>
            <person name="Weng S."/>
            <person name="Wong E.D."/>
            <person name="Lloyd P."/>
            <person name="Skrzypek M.S."/>
            <person name="Miyasato S.R."/>
            <person name="Simison M."/>
            <person name="Cherry J.M."/>
        </authorList>
    </citation>
    <scope>GENOME REANNOTATION</scope>
    <source>
        <strain>ATCC 204508 / S288c</strain>
    </source>
</reference>
<reference key="6">
    <citation type="journal article" date="1991" name="EMBO J.">
        <title>Mutation of the hamster cell cycle gene RCC1 is complemented by the homologous genes of Drosophila and S.cerevisiae.</title>
        <authorList>
            <person name="Ohtsubo M."/>
            <person name="Yoshida T."/>
            <person name="Seino H."/>
            <person name="Nishitani H."/>
            <person name="Clark K.L."/>
            <person name="Sprague G.F. Jr."/>
            <person name="Frasch M."/>
            <person name="Nishimoto T."/>
        </authorList>
    </citation>
    <scope>CHARACTERIZATION</scope>
    <scope>SUBCELLULAR LOCATION</scope>
</reference>
<reference key="7">
    <citation type="journal article" date="1991" name="Cell Regul.">
        <title>The yeast SRM1 protein and human RCC1 protein share analogous functions.</title>
        <authorList>
            <person name="Clark K.L."/>
            <person name="Ohtsubo M."/>
            <person name="Nishimoto T."/>
            <person name="Goebl M."/>
            <person name="Sprague G.F. Jr."/>
        </authorList>
    </citation>
    <scope>FUNCTION</scope>
    <scope>SUBCELLULAR LOCATION</scope>
</reference>
<reference key="8">
    <citation type="journal article" date="1996" name="Mol. Gen. Genet.">
        <title>Allele-specific suppression of a Saccharomyces cerevisiae prp20 mutation by overexpression of a nuclear serine/threonine protein kinase.</title>
        <authorList>
            <person name="Fleischmann M."/>
            <person name="Stagljar I."/>
            <person name="Aebi M."/>
        </authorList>
    </citation>
    <scope>PHOSPHORYLATION</scope>
</reference>
<reference key="9">
    <citation type="journal article" date="1991" name="Mol. Gen. Genet.">
        <title>Analysis of yeast prp20 mutations and functional complementation by the human homologue RCC1, a protein involved in the control of chromosome condensation.</title>
        <authorList>
            <person name="Fleischmann M."/>
            <person name="Clark M.W."/>
            <person name="Forrester W."/>
            <person name="Wickens M."/>
            <person name="Nishimoto T."/>
            <person name="Aebi M."/>
        </authorList>
    </citation>
    <scope>FUNCTION</scope>
    <scope>SUBCELLULAR LOCATION</scope>
</reference>
<reference key="10">
    <citation type="journal article" date="1992" name="Genes Dev.">
        <title>Defects in mRNA 3'-end formation, transcription initiation, and mRNA transport associated with the yeast mutation prp20: possible coupling of mRNA processing and chromatin structure.</title>
        <authorList>
            <person name="Forrester W."/>
            <person name="Stutz F."/>
            <person name="Rosbash M."/>
            <person name="Wickens M."/>
        </authorList>
    </citation>
    <scope>FUNCTION</scope>
</reference>
<reference key="11">
    <citation type="journal article" date="1993" name="EMBO J.">
        <title>Nuclear PRP20 protein is required for mRNA export.</title>
        <authorList>
            <person name="Amberg D.C."/>
            <person name="Fleischmann M."/>
            <person name="Stagljar I."/>
            <person name="Cole C.N."/>
            <person name="Aebi M."/>
        </authorList>
    </citation>
    <scope>FUNCTION</scope>
</reference>
<reference key="12">
    <citation type="journal article" date="1993" name="J. Cell Sci.">
        <title>Prp20, the Saccharomyces cerevisiae homolog of the regulator of chromosome condensation, RCC1, interacts with double-stranded DNA through a multi-component complex containing GTP-binding proteins.</title>
        <authorList>
            <person name="Lee A."/>
            <person name="Tam R."/>
            <person name="Belhumeur P."/>
            <person name="DiPaolo T."/>
            <person name="Clark M.W."/>
        </authorList>
    </citation>
    <scope>DNA-BINDING</scope>
    <scope>SUBUNIT</scope>
</reference>
<reference key="13">
    <citation type="journal article" date="1994" name="Genetics">
        <title>Overexpression of yeast homologs of the mammalian checkpoint gene RCC1 suppresses the class of alpha-tubulin mutations that arrest with excess microtubules.</title>
        <authorList>
            <person name="Kirkpatrick D."/>
            <person name="Solomon F."/>
        </authorList>
    </citation>
    <scope>FUNCTION</scope>
</reference>
<reference key="14">
    <citation type="journal article" date="2003" name="Nature">
        <title>Global analysis of protein expression in yeast.</title>
        <authorList>
            <person name="Ghaemmaghami S."/>
            <person name="Huh W.-K."/>
            <person name="Bower K."/>
            <person name="Howson R.W."/>
            <person name="Belle A."/>
            <person name="Dephoure N."/>
            <person name="O'Shea E.K."/>
            <person name="Weissman J.S."/>
        </authorList>
    </citation>
    <scope>LEVEL OF PROTEIN EXPRESSION [LARGE SCALE ANALYSIS]</scope>
</reference>
<reference key="15">
    <citation type="journal article" date="1997" name="J. Biol. Chem.">
        <title>Yrb2p is a nuclear protein that interacts with Prp20p, a yeast Rcc1 homologue.</title>
        <authorList>
            <person name="Taura T."/>
            <person name="Schlenstedt G."/>
            <person name="Silver P.A."/>
        </authorList>
    </citation>
    <scope>INTERACTION WITH YRB2</scope>
</reference>
<reference key="16">
    <citation type="journal article" date="1999" name="J. Cell Biol.">
        <title>A novel in vivo assay reveals inhibition of ribosomal nuclear export in ran-cycle and nucleoporin mutants.</title>
        <authorList>
            <person name="Hurt E.C."/>
            <person name="Hannus S."/>
            <person name="Schmelzl B."/>
            <person name="Lau D.M."/>
            <person name="Tollervey D."/>
            <person name="Simos G."/>
        </authorList>
    </citation>
    <scope>FUNCTION</scope>
</reference>
<reference key="17">
    <citation type="journal article" date="2000" name="Mol. Biol. Cell">
        <title>Factors affecting nuclear export of the 60S ribosomal subunit in vivo.</title>
        <authorList>
            <person name="Stage-Zimmermann T."/>
            <person name="Schmidt U."/>
            <person name="Silver P.A."/>
        </authorList>
    </citation>
    <scope>FUNCTION</scope>
</reference>
<reference key="18">
    <citation type="journal article" date="2000" name="RNA">
        <title>Pre-mRNA processing factors are required for nuclear export.</title>
        <authorList>
            <person name="Brodsky A.S."/>
            <person name="Silver P.A."/>
        </authorList>
    </citation>
    <scope>FUNCTION</scope>
</reference>
<reference key="19">
    <citation type="journal article" date="2001" name="J. Biol. Chem.">
        <title>Interaction between Ran and Mog1 is required for efficient nuclear protein import.</title>
        <authorList>
            <person name="Baker R.P."/>
            <person name="Harreman M.T."/>
            <person name="Eccleston J.F."/>
            <person name="Corbett A.H."/>
            <person name="Stewart M."/>
        </authorList>
    </citation>
    <scope>FUNCTION</scope>
</reference>
<reference key="20">
    <citation type="journal article" date="2001" name="J. Cell Biol.">
        <title>The nucleoporin Nup60p functions as a Gsp1p-GTP-sensitive tether for Nup2p at the nuclear pore complex.</title>
        <authorList>
            <person name="Denning D.P."/>
            <person name="Mykytka B."/>
            <person name="Allen N.P."/>
            <person name="Huang L."/>
            <person name="Burlingame A."/>
            <person name="Rexach M."/>
        </authorList>
    </citation>
    <scope>INTERACTION WITH NUP60</scope>
</reference>
<reference key="21">
    <citation type="journal article" date="2001" name="Mol. Genet. Genomics">
        <title>Functional analysis of the yeast Ran exchange factor Prp20p: in vivo evidence for the RanGTP gradient model.</title>
        <authorList>
            <person name="Akhtar N."/>
            <person name="Hagan H."/>
            <person name="Lopilato J.E."/>
            <person name="Corbett A.H."/>
        </authorList>
    </citation>
    <scope>SUBCELLULAR LOCATION</scope>
    <scope>NUCLEAR LOCALIZATION SIGNAL</scope>
    <scope>MUTAGENESIS OF LYS-19; LYS-20 AND LYS-23</scope>
    <scope>INTERACTION WITH GSP1</scope>
</reference>
<reference key="22">
    <citation type="journal article" date="2001" name="Mol. Genet. Genomics">
        <title>Overexpression of Bud5p can suppress mutations in the Gsp1p guanine nucleotide exchange factor Prp20p in Saccharomyces cerevisiae.</title>
        <authorList>
            <person name="Clement M."/>
            <person name="Lavallee F."/>
            <person name="Barbes-Morin G."/>
            <person name="de Repentigny L."/>
            <person name="Belhumeur P."/>
        </authorList>
    </citation>
    <scope>FUNCTION</scope>
</reference>
<reference key="23">
    <citation type="journal article" date="2003" name="J. Cell Biol.">
        <title>The Ran GTPase cycle is required for yeast nuclear pore complex assembly.</title>
        <authorList>
            <person name="Ryan K.J."/>
            <person name="McCaffery J.M."/>
            <person name="Wente S.R."/>
        </authorList>
    </citation>
    <scope>FUNCTION</scope>
    <scope>MUTAGENESIS OF GLY-282</scope>
</reference>
<reference key="24">
    <citation type="journal article" date="2005" name="J. Cell Biol.">
        <title>The mobile nucleoporin Nup2p and chromatin-bound Prp20p function in endogenous NPC-mediated transcriptional control.</title>
        <authorList>
            <person name="Dilworth D.J."/>
            <person name="Tackett A.J."/>
            <person name="Rogers R.S."/>
            <person name="Yi E.C."/>
            <person name="Christmas R.H."/>
            <person name="Smith J.J."/>
            <person name="Siegel A.F."/>
            <person name="Chait B.T."/>
            <person name="Wozniak R.W."/>
            <person name="Aitchison J.D."/>
        </authorList>
    </citation>
    <scope>FUNCTION</scope>
    <scope>SUBCELLULAR LOCATION</scope>
    <scope>CHROMATIN-BINDING</scope>
</reference>
<reference key="25">
    <citation type="journal article" date="2007" name="J. Proteome Res.">
        <title>Large-scale phosphorylation analysis of alpha-factor-arrested Saccharomyces cerevisiae.</title>
        <authorList>
            <person name="Li X."/>
            <person name="Gerber S.A."/>
            <person name="Rudner A.D."/>
            <person name="Beausoleil S.A."/>
            <person name="Haas W."/>
            <person name="Villen J."/>
            <person name="Elias J.E."/>
            <person name="Gygi S.P."/>
        </authorList>
    </citation>
    <scope>PHOSPHORYLATION [LARGE SCALE ANALYSIS] AT SER-135 AND SER-136</scope>
    <scope>IDENTIFICATION BY MASS SPECTROMETRY [LARGE SCALE ANALYSIS]</scope>
    <source>
        <strain>ADR376</strain>
    </source>
</reference>
<reference key="26">
    <citation type="journal article" date="2008" name="Mol. Cell. Proteomics">
        <title>A multidimensional chromatography technology for in-depth phosphoproteome analysis.</title>
        <authorList>
            <person name="Albuquerque C.P."/>
            <person name="Smolka M.B."/>
            <person name="Payne S.H."/>
            <person name="Bafna V."/>
            <person name="Eng J."/>
            <person name="Zhou H."/>
        </authorList>
    </citation>
    <scope>PHOSPHORYLATION [LARGE SCALE ANALYSIS] AT SER-135 AND SER-136</scope>
    <scope>IDENTIFICATION BY MASS SPECTROMETRY [LARGE SCALE ANALYSIS]</scope>
</reference>
<reference key="27">
    <citation type="journal article" date="2009" name="Science">
        <title>Global analysis of Cdk1 substrate phosphorylation sites provides insights into evolution.</title>
        <authorList>
            <person name="Holt L.J."/>
            <person name="Tuch B.B."/>
            <person name="Villen J."/>
            <person name="Johnson A.D."/>
            <person name="Gygi S.P."/>
            <person name="Morgan D.O."/>
        </authorList>
    </citation>
    <scope>PHOSPHORYLATION [LARGE SCALE ANALYSIS] AT SER-135 AND SER-136</scope>
    <scope>IDENTIFICATION BY MASS SPECTROMETRY [LARGE SCALE ANALYSIS]</scope>
</reference>
<accession>P21827</accession>
<accession>D6VU48</accession>
<evidence type="ECO:0000256" key="1">
    <source>
        <dbReference type="SAM" id="MobiDB-lite"/>
    </source>
</evidence>
<evidence type="ECO:0000269" key="2">
    <source>
    </source>
</evidence>
<evidence type="ECO:0000269" key="3">
    <source>
    </source>
</evidence>
<evidence type="ECO:0000269" key="4">
    <source>
    </source>
</evidence>
<evidence type="ECO:0000269" key="5">
    <source>
    </source>
</evidence>
<evidence type="ECO:0000269" key="6">
    <source>
    </source>
</evidence>
<evidence type="ECO:0000269" key="7">
    <source>
    </source>
</evidence>
<evidence type="ECO:0000269" key="8">
    <source>
    </source>
</evidence>
<evidence type="ECO:0000269" key="9">
    <source>
    </source>
</evidence>
<evidence type="ECO:0000269" key="10">
    <source>
    </source>
</evidence>
<evidence type="ECO:0000269" key="11">
    <source>
    </source>
</evidence>
<evidence type="ECO:0000269" key="12">
    <source>
    </source>
</evidence>
<evidence type="ECO:0000269" key="13">
    <source>
    </source>
</evidence>
<evidence type="ECO:0000269" key="14">
    <source>
    </source>
</evidence>
<evidence type="ECO:0000269" key="15">
    <source>
    </source>
</evidence>
<evidence type="ECO:0000269" key="16">
    <source>
    </source>
</evidence>
<evidence type="ECO:0000269" key="17">
    <source>
    </source>
</evidence>
<evidence type="ECO:0000269" key="18">
    <source>
    </source>
</evidence>
<evidence type="ECO:0000269" key="19">
    <source>
    </source>
</evidence>
<evidence type="ECO:0000269" key="20">
    <source>
    </source>
</evidence>
<evidence type="ECO:0000269" key="21">
    <source>
    </source>
</evidence>
<evidence type="ECO:0000269" key="22">
    <source>
    </source>
</evidence>
<evidence type="ECO:0007744" key="23">
    <source>
    </source>
</evidence>
<evidence type="ECO:0007744" key="24">
    <source>
    </source>
</evidence>
<evidence type="ECO:0007744" key="25">
    <source>
    </source>
</evidence>
<evidence type="ECO:0007829" key="26">
    <source>
        <dbReference type="PDB" id="3OF7"/>
    </source>
</evidence>
<evidence type="ECO:0007829" key="27">
    <source>
        <dbReference type="PDB" id="5T94"/>
    </source>
</evidence>
<gene>
    <name type="primary">SRM1</name>
    <name type="synonym">MTR1</name>
    <name type="synonym">PRP20</name>
    <name type="ordered locus">YGL097W</name>
</gene>
<sequence length="482" mass="53014">MVKRTVATNGDASGAHRAKKMSKTHASHIINAQEDYKHMYLSVQPLDIFCWGTGSMCELGLGPLAKNKEVKRPRLNPFLPRDEAKIISFAVGGMHTLALDEESNVWSWGCNDVGALGRDTSNAKEQLKDMDADDSSDDEDGDLNELESTPAKIPRESFPPLAEGHKVVQLAATDNMSCALFSNGEVYAWGTFRCNEGILGFYQDKIKIQKTPWKVPTFSKYNIVQLAPGKDHILFLDEEGMVFAWGNGQQNQLGRKVMERFRLKTLDPRPFGLRHVKYIASGENHCFALTKDNKLVSWGLNQFGQCGVSEDVEDGALVTKPKRLALPDNVVIRSIAAGEHHSLILSQDGDLYSCGRLDMFEVGIPKDNLPEYTYKDVHGKARAVPLPTKLNNVPKFKSVAAGSHHSVAVAQNGIAYSWGFGETYAVGLGPFEDDTEVPTRIKNTATQDHNIILVGCGGQFSVSGGVKLSDEDAEKRADEMDD</sequence>
<feature type="chain" id="PRO_0000206634" description="Guanine nucleotide exchange factor SRM1">
    <location>
        <begin position="1"/>
        <end position="482"/>
    </location>
</feature>
<feature type="repeat" description="RCC1 1">
    <location>
        <begin position="45"/>
        <end position="101"/>
    </location>
</feature>
<feature type="repeat" description="RCC1 2">
    <location>
        <begin position="103"/>
        <end position="152"/>
    </location>
</feature>
<feature type="repeat" description="RCC1 3">
    <location>
        <begin position="183"/>
        <end position="238"/>
    </location>
</feature>
<feature type="repeat" description="RCC1 4">
    <location>
        <begin position="239"/>
        <end position="291"/>
    </location>
</feature>
<feature type="repeat" description="RCC1 5">
    <location>
        <begin position="292"/>
        <end position="347"/>
    </location>
</feature>
<feature type="repeat" description="RCC1 6">
    <location>
        <begin position="349"/>
        <end position="411"/>
    </location>
</feature>
<feature type="repeat" description="RCC1 7">
    <location>
        <begin position="412"/>
        <end position="466"/>
    </location>
</feature>
<feature type="region of interest" description="Disordered" evidence="1">
    <location>
        <begin position="1"/>
        <end position="22"/>
    </location>
</feature>
<feature type="region of interest" description="Disordered" evidence="1">
    <location>
        <begin position="128"/>
        <end position="158"/>
    </location>
</feature>
<feature type="short sequence motif" description="Nuclear localization signal" evidence="5">
    <location>
        <begin position="15"/>
        <end position="26"/>
    </location>
</feature>
<feature type="compositionally biased region" description="Polar residues" evidence="1">
    <location>
        <begin position="1"/>
        <end position="11"/>
    </location>
</feature>
<feature type="compositionally biased region" description="Acidic residues" evidence="1">
    <location>
        <begin position="131"/>
        <end position="145"/>
    </location>
</feature>
<feature type="modified residue" description="Phosphoserine" evidence="23 24 25">
    <location>
        <position position="135"/>
    </location>
</feature>
<feature type="modified residue" description="Phosphoserine" evidence="23 24 25">
    <location>
        <position position="136"/>
    </location>
</feature>
<feature type="mutagenesis site" description="Impairs correct nuclear localization; when associated with T-20 and T-23." evidence="5">
    <original>K</original>
    <variation>T</variation>
    <location>
        <position position="19"/>
    </location>
</feature>
<feature type="mutagenesis site" description="Impairs activity." evidence="5">
    <original>K</original>
    <variation>A</variation>
    <variation>Q</variation>
    <location>
        <position position="20"/>
    </location>
</feature>
<feature type="mutagenesis site" description="Impairs correct nuclear localization; when associated with T-19 and T-23." evidence="5">
    <original>K</original>
    <variation>T</variation>
    <location>
        <position position="20"/>
    </location>
</feature>
<feature type="mutagenesis site" description="Impairs correct nuclear localization; when associated with T-19 and T-20." evidence="5">
    <original>K</original>
    <variation>T</variation>
    <location>
        <position position="23"/>
    </location>
</feature>
<feature type="mutagenesis site" description="Leads to temperature-dependent mislocalization of nucleoporins (nups) and the pore-membrane protein POM152." evidence="8">
    <original>G</original>
    <variation>S</variation>
    <location>
        <position position="282"/>
    </location>
</feature>
<feature type="helix" evidence="26">
    <location>
        <begin position="33"/>
        <end position="36"/>
    </location>
</feature>
<feature type="helix" evidence="26">
    <location>
        <begin position="37"/>
        <end position="40"/>
    </location>
</feature>
<feature type="strand" evidence="26">
    <location>
        <begin position="47"/>
        <end position="53"/>
    </location>
</feature>
<feature type="helix" evidence="26">
    <location>
        <begin position="65"/>
        <end position="68"/>
    </location>
</feature>
<feature type="strand" evidence="26">
    <location>
        <begin position="69"/>
        <end position="75"/>
    </location>
</feature>
<feature type="turn" evidence="26">
    <location>
        <begin position="81"/>
        <end position="83"/>
    </location>
</feature>
<feature type="strand" evidence="26">
    <location>
        <begin position="86"/>
        <end position="91"/>
    </location>
</feature>
<feature type="strand" evidence="26">
    <location>
        <begin position="93"/>
        <end position="100"/>
    </location>
</feature>
<feature type="strand" evidence="26">
    <location>
        <begin position="105"/>
        <end position="109"/>
    </location>
</feature>
<feature type="helix" evidence="26">
    <location>
        <begin position="145"/>
        <end position="148"/>
    </location>
</feature>
<feature type="helix" evidence="26">
    <location>
        <begin position="155"/>
        <end position="157"/>
    </location>
</feature>
<feature type="helix" evidence="26">
    <location>
        <begin position="159"/>
        <end position="162"/>
    </location>
</feature>
<feature type="strand" evidence="26">
    <location>
        <begin position="167"/>
        <end position="172"/>
    </location>
</feature>
<feature type="strand" evidence="26">
    <location>
        <begin position="174"/>
        <end position="181"/>
    </location>
</feature>
<feature type="strand" evidence="26">
    <location>
        <begin position="186"/>
        <end position="190"/>
    </location>
</feature>
<feature type="strand" evidence="26">
    <location>
        <begin position="192"/>
        <end position="194"/>
    </location>
</feature>
<feature type="strand" evidence="26">
    <location>
        <begin position="197"/>
        <end position="202"/>
    </location>
</feature>
<feature type="turn" evidence="26">
    <location>
        <begin position="203"/>
        <end position="205"/>
    </location>
</feature>
<feature type="strand" evidence="26">
    <location>
        <begin position="209"/>
        <end position="214"/>
    </location>
</feature>
<feature type="strand" evidence="27">
    <location>
        <begin position="219"/>
        <end position="221"/>
    </location>
</feature>
<feature type="strand" evidence="26">
    <location>
        <begin position="223"/>
        <end position="228"/>
    </location>
</feature>
<feature type="strand" evidence="26">
    <location>
        <begin position="230"/>
        <end position="237"/>
    </location>
</feature>
<feature type="strand" evidence="26">
    <location>
        <begin position="242"/>
        <end position="246"/>
    </location>
</feature>
<feature type="helix" evidence="26">
    <location>
        <begin position="259"/>
        <end position="261"/>
    </location>
</feature>
<feature type="turn" evidence="26">
    <location>
        <begin position="262"/>
        <end position="265"/>
    </location>
</feature>
<feature type="strand" evidence="26">
    <location>
        <begin position="275"/>
        <end position="281"/>
    </location>
</feature>
<feature type="strand" evidence="26">
    <location>
        <begin position="283"/>
        <end position="290"/>
    </location>
</feature>
<feature type="strand" evidence="26">
    <location>
        <begin position="295"/>
        <end position="300"/>
    </location>
</feature>
<feature type="turn" evidence="27">
    <location>
        <begin position="312"/>
        <end position="314"/>
    </location>
</feature>
<feature type="strand" evidence="26">
    <location>
        <begin position="317"/>
        <end position="323"/>
    </location>
</feature>
<feature type="strand" evidence="26">
    <location>
        <begin position="332"/>
        <end position="337"/>
    </location>
</feature>
<feature type="strand" evidence="26">
    <location>
        <begin position="339"/>
        <end position="346"/>
    </location>
</feature>
<feature type="strand" evidence="26">
    <location>
        <begin position="351"/>
        <end position="356"/>
    </location>
</feature>
<feature type="turn" evidence="27">
    <location>
        <begin position="357"/>
        <end position="360"/>
    </location>
</feature>
<feature type="helix" evidence="26">
    <location>
        <begin position="366"/>
        <end position="368"/>
    </location>
</feature>
<feature type="strand" evidence="26">
    <location>
        <begin position="381"/>
        <end position="389"/>
    </location>
</feature>
<feature type="strand" evidence="26">
    <location>
        <begin position="396"/>
        <end position="401"/>
    </location>
</feature>
<feature type="strand" evidence="26">
    <location>
        <begin position="403"/>
        <end position="410"/>
    </location>
</feature>
<feature type="strand" evidence="26">
    <location>
        <begin position="415"/>
        <end position="419"/>
    </location>
</feature>
<feature type="strand" evidence="26">
    <location>
        <begin position="435"/>
        <end position="440"/>
    </location>
</feature>
<feature type="turn" evidence="26">
    <location>
        <begin position="444"/>
        <end position="448"/>
    </location>
</feature>
<feature type="strand" evidence="26">
    <location>
        <begin position="449"/>
        <end position="456"/>
    </location>
</feature>
<feature type="strand" evidence="26">
    <location>
        <begin position="458"/>
        <end position="467"/>
    </location>
</feature>
<feature type="helix" evidence="26">
    <location>
        <begin position="470"/>
        <end position="481"/>
    </location>
</feature>
<organism>
    <name type="scientific">Saccharomyces cerevisiae (strain ATCC 204508 / S288c)</name>
    <name type="common">Baker's yeast</name>
    <dbReference type="NCBI Taxonomy" id="559292"/>
    <lineage>
        <taxon>Eukaryota</taxon>
        <taxon>Fungi</taxon>
        <taxon>Dikarya</taxon>
        <taxon>Ascomycota</taxon>
        <taxon>Saccharomycotina</taxon>
        <taxon>Saccharomycetes</taxon>
        <taxon>Saccharomycetales</taxon>
        <taxon>Saccharomycetaceae</taxon>
        <taxon>Saccharomyces</taxon>
    </lineage>
</organism>
<comment type="function">
    <text evidence="2 3 4 7 8 9 11 12 13 15 16 17 18 22">Guanine nucleotide exchange factor that promotes the exchange of GSP1/GSP2-bound GDP by GTP and controls RNA metabolism and transport. Involved in yeast pheromone response pathway and in mRNA metabolism. Involved in nuclear pore complex (NPC) assembly and required for mRNA and ribosome nuclear export. Binds chromatin and is involved NPC-mediated transcriptional control.</text>
</comment>
<comment type="subunit">
    <text evidence="5 6 19 21">Component of a multicomponent complex composed of six to seven proteins, which has a collective molecular mass greater than 150 kDa. Interacts with GSP1 and YRB2.</text>
</comment>
<comment type="subcellular location">
    <subcellularLocation>
        <location evidence="5 11 12 13 14">Nucleus</location>
    </subcellularLocation>
</comment>
<comment type="induction">
    <text>By pheromone.</text>
</comment>
<comment type="PTM">
    <text evidence="20">Phosphorylated; possibly by KSP1.</text>
</comment>
<comment type="miscellaneous">
    <text evidence="10">Present with 12100 molecules/cell in log phase SD medium.</text>
</comment>